<accession>Q86VI3</accession>
<accession>Q5T3H8</accession>
<name>IQGA3_HUMAN</name>
<feature type="chain" id="PRO_0000056651" description="Ras GTPase-activating-like protein IQGAP3">
    <location>
        <begin position="1"/>
        <end position="1631"/>
    </location>
</feature>
<feature type="domain" description="Calponin-homology (CH)" evidence="2">
    <location>
        <begin position="34"/>
        <end position="149"/>
    </location>
</feature>
<feature type="domain" description="IQ 1" evidence="3">
    <location>
        <begin position="730"/>
        <end position="759"/>
    </location>
</feature>
<feature type="domain" description="IQ 2" evidence="3">
    <location>
        <begin position="760"/>
        <end position="789"/>
    </location>
</feature>
<feature type="domain" description="IQ 3" evidence="3">
    <location>
        <begin position="790"/>
        <end position="819"/>
    </location>
</feature>
<feature type="domain" description="IQ 4" evidence="3">
    <location>
        <begin position="820"/>
        <end position="849"/>
    </location>
</feature>
<feature type="domain" description="Ras-GAP" evidence="4">
    <location>
        <begin position="1004"/>
        <end position="1253"/>
    </location>
</feature>
<feature type="modified residue" description="Phosphotyrosine" evidence="1">
    <location>
        <position position="162"/>
    </location>
</feature>
<feature type="modified residue" description="Phosphoserine" evidence="9 10">
    <location>
        <position position="539"/>
    </location>
</feature>
<feature type="modified residue" description="Phosphoserine" evidence="8 10 11">
    <location>
        <position position="1424"/>
    </location>
</feature>
<feature type="sequence variant" id="VAR_055278" description="In dbSNP:rs2488269." evidence="5 6">
    <original>R</original>
    <variation>G</variation>
    <location>
        <position position="391"/>
    </location>
</feature>
<feature type="sequence variant" id="VAR_055279" description="In dbSNP:rs11264498.">
    <original>V</original>
    <variation>L</variation>
    <location>
        <position position="410"/>
    </location>
</feature>
<feature type="sequence variant" id="VAR_055280" description="In dbSNP:rs11264496.">
    <original>D</original>
    <variation>N</variation>
    <location>
        <position position="645"/>
    </location>
</feature>
<feature type="sequence variant" id="VAR_055281" description="In dbSNP:rs744224." evidence="5 6">
    <original>R</original>
    <variation>C</variation>
    <location>
        <position position="663"/>
    </location>
</feature>
<feature type="sequence variant" id="VAR_055282" description="In dbSNP:rs1078890.">
    <original>H</original>
    <variation>Y</variation>
    <location>
        <position position="770"/>
    </location>
</feature>
<feature type="sequence variant" id="VAR_055283" description="In dbSNP:rs11804414.">
    <original>Q</original>
    <variation>H</variation>
    <location>
        <position position="1061"/>
    </location>
</feature>
<feature type="sequence variant" id="VAR_055284" description="In dbSNP:rs12562301.">
    <original>P</original>
    <variation>S</variation>
    <location>
        <position position="1097"/>
    </location>
</feature>
<feature type="sequence conflict" description="In Ref. 4; BAC85501." evidence="7" ref="4">
    <original>A</original>
    <variation>S</variation>
    <location>
        <position position="610"/>
    </location>
</feature>
<feature type="strand" evidence="12">
    <location>
        <begin position="1535"/>
        <end position="1538"/>
    </location>
</feature>
<feature type="helix" evidence="12">
    <location>
        <begin position="1539"/>
        <end position="1544"/>
    </location>
</feature>
<feature type="strand" evidence="12">
    <location>
        <begin position="1547"/>
        <end position="1551"/>
    </location>
</feature>
<feature type="helix" evidence="12">
    <location>
        <begin position="1556"/>
        <end position="1561"/>
    </location>
</feature>
<feature type="strand" evidence="12">
    <location>
        <begin position="1562"/>
        <end position="1568"/>
    </location>
</feature>
<feature type="strand" evidence="12">
    <location>
        <begin position="1574"/>
        <end position="1581"/>
    </location>
</feature>
<feature type="strand" evidence="12">
    <location>
        <begin position="1589"/>
        <end position="1592"/>
    </location>
</feature>
<feature type="helix" evidence="12">
    <location>
        <begin position="1593"/>
        <end position="1601"/>
    </location>
</feature>
<feature type="strand" evidence="12">
    <location>
        <begin position="1606"/>
        <end position="1609"/>
    </location>
</feature>
<feature type="turn" evidence="12">
    <location>
        <begin position="1610"/>
        <end position="1612"/>
    </location>
</feature>
<feature type="strand" evidence="12">
    <location>
        <begin position="1613"/>
        <end position="1616"/>
    </location>
</feature>
<feature type="helix" evidence="12">
    <location>
        <begin position="1617"/>
        <end position="1627"/>
    </location>
</feature>
<keyword id="KW-0002">3D-structure</keyword>
<keyword id="KW-0112">Calmodulin-binding</keyword>
<keyword id="KW-0597">Phosphoprotein</keyword>
<keyword id="KW-1267">Proteomics identification</keyword>
<keyword id="KW-1185">Reference proteome</keyword>
<keyword id="KW-0677">Repeat</keyword>
<sequence length="1631" mass="184699">MERRAAGPGWAAYERLTAEEMDEQRRQNVAYQYLCRLEEAKRWMEACLKEELPSPVELEESLRNGVLLAKLGHCFAPSVVPLKKIYDVEQLRYQATGLHFRHTDNINFWLSAIAHIGLPSTFFPETTDIYDKKNMPRVVYCIHALSLFLFRLGLAPQIHDLYGKVKFTAEELSNMASELAKYGLQLPAFSKIGGILANELSVDEAAVHAAVLAINEAVERGVVEDTLAALQNPSALLENLREPLAAVYQEMLAQAKMEKAANARNHDDRESQDIYDHYLTQAEIQGNINHVNVHGALEVVDDALERQSPEALLKALQDPALALRGVRRDFADWYLEQLNSDREQKAQELGLVELLEKEEVQAGVAAANTKGDQEQAMLHAVQRINKAIRRRVAADTVKELMCPEAQLPPVYPVASSMYQLELAVLQQQQGELGQEELFVAVEMLSAVVLINRALEARDASGFWSSLVNPATGLAEVEGENAQRYFDALLKLRQERGMGEDFLSWNDLQATVSQVNAQTQEETDRVLAVSLINEALDKGSPEKTLSALLLPAAGLDDVSLPVAPRYHLLLVAAKRQKAQVTGDPGAVLWLEEIRQGVVRANQDTNTAQRMALGVAAINQAIKEGKAAQTERVLRNPAVALRGVVPDCANGYQRALESAMAKKQRPADTAFWVQHDMKDGTAYYFHLQTFQGIWEQPPGCPLNTSHLTREEIQSAVTKVTAAYDRQQLWKANVGFVIQLQARLRGFLVRQKFAEHSHFLRTWLPAVIKIQAHWRGYRQRKIYLEWLQYFKANLDAIIKIQAWARMWAARRQYLRRLHYFQKNVNSIVKIQAFFRARKAQDDYRILVHAPHPPLSVVRRFAHLLNQSQQDFLAEAELLKLQEEVVRKIRSNQQLEQDLNIMDIKIGLLVKNRITLQEVVSHCKKLTKRNKEQLSDMMVLDKQKGLKSLSKEKRQKLEAYQHLFYLLQTQPIYLAKLIFQMPQNKTTKFMEAVIFSLYNYASSRREAYLLLQLFKTALQEEIKSKVEQPQDVVTGNPTVVRLVVRFYRNGRGQSALQEILGKVIQDVLEDKVLSVHTDPVHLYKNWINQTEAQTGQRSHLPYDVTPEQALSHPEVQRRLDIALRNLLAMTDKFLLAITSSVDQIPYGMRYVAKVLKATLAEKFPDATDSEVYKVVGNLLYYRFLNPAVVAPDAFDIVAMAAGGALAAPQRHALGAVAQLLQHAAAGKAFSGQSQHLRVLNDYLEETHLKFRKFIHRACQVPEPEERFAVDEYSDMVAVAKPMVYITVGELVNTHRLLLEHQDCIAPDHQDPLHELLEDLGELPTIPDLIGESIAADGHTDLSKLEVSLTLTNKFEGLEADADDSNTRSLLLSTKQLLADIIQFHPGDTLKEILSLSASREQEAAHKQLMSRRQACTAQTPEPLRRHRSLTAHSLLPLAEKQRRVLRNLRRLEALGLVSARNGYQGLVDELAKDIRNQHRHRHRRKAELVKLQATLQGLSTKTTFYEEQGDYYSQYIRACLDHLAPDSKSSGKGKKQPSLHYTAAQLLEKGVLVEIEDLPASHFRNVIFDITPGDEAGKFEVNAKFLGVDMERFQLHYQDLLQLQYEGVAVMKLFNKAKVNVNLLIFLLNKKFLRK</sequence>
<dbReference type="EMBL" id="AY253300">
    <property type="protein sequence ID" value="AAP06954.1"/>
    <property type="molecule type" value="mRNA"/>
</dbReference>
<dbReference type="EMBL" id="AB105103">
    <property type="protein sequence ID" value="BAC78211.1"/>
    <property type="molecule type" value="mRNA"/>
</dbReference>
<dbReference type="EMBL" id="AL365181">
    <property type="status" value="NOT_ANNOTATED_CDS"/>
    <property type="molecule type" value="Genomic_DNA"/>
</dbReference>
<dbReference type="EMBL" id="AK122653">
    <property type="protein sequence ID" value="BAC85501.1"/>
    <property type="molecule type" value="mRNA"/>
</dbReference>
<dbReference type="CCDS" id="CCDS1144.1"/>
<dbReference type="RefSeq" id="NP_839943.2">
    <property type="nucleotide sequence ID" value="NM_178229.4"/>
</dbReference>
<dbReference type="PDB" id="3ISU">
    <property type="method" value="X-ray"/>
    <property type="resolution" value="1.88 A"/>
    <property type="chains" value="A=1529-1631"/>
</dbReference>
<dbReference type="PDBsum" id="3ISU"/>
<dbReference type="SMR" id="Q86VI3"/>
<dbReference type="BioGRID" id="126102">
    <property type="interactions" value="177"/>
</dbReference>
<dbReference type="FunCoup" id="Q86VI3">
    <property type="interactions" value="1132"/>
</dbReference>
<dbReference type="IntAct" id="Q86VI3">
    <property type="interactions" value="99"/>
</dbReference>
<dbReference type="MINT" id="Q86VI3"/>
<dbReference type="STRING" id="9606.ENSP00000354451"/>
<dbReference type="GlyCosmos" id="Q86VI3">
    <property type="glycosylation" value="1 site, 2 glycans"/>
</dbReference>
<dbReference type="GlyGen" id="Q86VI3">
    <property type="glycosylation" value="3 sites, 2 O-linked glycans (2 sites)"/>
</dbReference>
<dbReference type="iPTMnet" id="Q86VI3"/>
<dbReference type="PhosphoSitePlus" id="Q86VI3"/>
<dbReference type="SwissPalm" id="Q86VI3"/>
<dbReference type="BioMuta" id="IQGAP3"/>
<dbReference type="DMDM" id="229462887"/>
<dbReference type="jPOST" id="Q86VI3"/>
<dbReference type="MassIVE" id="Q86VI3"/>
<dbReference type="PaxDb" id="9606-ENSP00000354451"/>
<dbReference type="PeptideAtlas" id="Q86VI3"/>
<dbReference type="ProteomicsDB" id="70023"/>
<dbReference type="Pumba" id="Q86VI3"/>
<dbReference type="Antibodypedia" id="34218">
    <property type="antibodies" value="175 antibodies from 25 providers"/>
</dbReference>
<dbReference type="DNASU" id="128239"/>
<dbReference type="Ensembl" id="ENST00000361170.7">
    <property type="protein sequence ID" value="ENSP00000354451.2"/>
    <property type="gene ID" value="ENSG00000183856.11"/>
</dbReference>
<dbReference type="Ensembl" id="ENST00000708577.1">
    <property type="protein sequence ID" value="ENSP00000517286.1"/>
    <property type="gene ID" value="ENSG00000291754.1"/>
</dbReference>
<dbReference type="GeneID" id="128239"/>
<dbReference type="KEGG" id="hsa:128239"/>
<dbReference type="MANE-Select" id="ENST00000361170.7">
    <property type="protein sequence ID" value="ENSP00000354451.2"/>
    <property type="RefSeq nucleotide sequence ID" value="NM_178229.5"/>
    <property type="RefSeq protein sequence ID" value="NP_839943.3"/>
</dbReference>
<dbReference type="UCSC" id="uc001fpf.4">
    <property type="organism name" value="human"/>
</dbReference>
<dbReference type="AGR" id="HGNC:20669"/>
<dbReference type="CTD" id="128239"/>
<dbReference type="DisGeNET" id="128239"/>
<dbReference type="GeneCards" id="IQGAP3"/>
<dbReference type="HGNC" id="HGNC:20669">
    <property type="gene designation" value="IQGAP3"/>
</dbReference>
<dbReference type="HPA" id="ENSG00000183856">
    <property type="expression patterns" value="Tissue enhanced (bone)"/>
</dbReference>
<dbReference type="MalaCards" id="IQGAP3"/>
<dbReference type="MIM" id="621092">
    <property type="type" value="gene"/>
</dbReference>
<dbReference type="neXtProt" id="NX_Q86VI3"/>
<dbReference type="OpenTargets" id="ENSG00000183856"/>
<dbReference type="PharmGKB" id="PA134954177"/>
<dbReference type="VEuPathDB" id="HostDB:ENSG00000183856"/>
<dbReference type="eggNOG" id="KOG2128">
    <property type="taxonomic scope" value="Eukaryota"/>
</dbReference>
<dbReference type="GeneTree" id="ENSGT00950000183076"/>
<dbReference type="HOGENOM" id="CLU_000972_2_1_1"/>
<dbReference type="InParanoid" id="Q86VI3"/>
<dbReference type="OMA" id="RELMCPE"/>
<dbReference type="OrthoDB" id="775356at2759"/>
<dbReference type="PAN-GO" id="Q86VI3">
    <property type="GO annotations" value="5 GO annotations based on evolutionary models"/>
</dbReference>
<dbReference type="PhylomeDB" id="Q86VI3"/>
<dbReference type="TreeFam" id="TF313078"/>
<dbReference type="PathwayCommons" id="Q86VI3"/>
<dbReference type="Reactome" id="R-HSA-5626467">
    <property type="pathway name" value="RHO GTPases activate IQGAPs"/>
</dbReference>
<dbReference type="Reactome" id="R-HSA-8980692">
    <property type="pathway name" value="RHOA GTPase cycle"/>
</dbReference>
<dbReference type="Reactome" id="R-HSA-9013026">
    <property type="pathway name" value="RHOB GTPase cycle"/>
</dbReference>
<dbReference type="Reactome" id="R-HSA-9013106">
    <property type="pathway name" value="RHOC GTPase cycle"/>
</dbReference>
<dbReference type="Reactome" id="R-HSA-9013148">
    <property type="pathway name" value="CDC42 GTPase cycle"/>
</dbReference>
<dbReference type="Reactome" id="R-HSA-9013149">
    <property type="pathway name" value="RAC1 GTPase cycle"/>
</dbReference>
<dbReference type="Reactome" id="R-HSA-9013406">
    <property type="pathway name" value="RHOQ GTPase cycle"/>
</dbReference>
<dbReference type="Reactome" id="R-HSA-9013409">
    <property type="pathway name" value="RHOJ GTPase cycle"/>
</dbReference>
<dbReference type="SignaLink" id="Q86VI3"/>
<dbReference type="BioGRID-ORCS" id="128239">
    <property type="hits" value="34 hits in 1160 CRISPR screens"/>
</dbReference>
<dbReference type="ChiTaRS" id="IQGAP3">
    <property type="organism name" value="human"/>
</dbReference>
<dbReference type="EvolutionaryTrace" id="Q86VI3"/>
<dbReference type="GenomeRNAi" id="128239"/>
<dbReference type="Pharos" id="Q86VI3">
    <property type="development level" value="Tbio"/>
</dbReference>
<dbReference type="PRO" id="PR:Q86VI3"/>
<dbReference type="Proteomes" id="UP000005640">
    <property type="component" value="Chromosome 1"/>
</dbReference>
<dbReference type="RNAct" id="Q86VI3">
    <property type="molecule type" value="protein"/>
</dbReference>
<dbReference type="Bgee" id="ENSG00000183856">
    <property type="expression patterns" value="Expressed in buccal mucosa cell and 144 other cell types or tissues"/>
</dbReference>
<dbReference type="ExpressionAtlas" id="Q86VI3">
    <property type="expression patterns" value="baseline and differential"/>
</dbReference>
<dbReference type="GO" id="GO:0005938">
    <property type="term" value="C:cell cortex"/>
    <property type="evidence" value="ECO:0000318"/>
    <property type="project" value="GO_Central"/>
</dbReference>
<dbReference type="GO" id="GO:0005911">
    <property type="term" value="C:cell-cell junction"/>
    <property type="evidence" value="ECO:0007669"/>
    <property type="project" value="Ensembl"/>
</dbReference>
<dbReference type="GO" id="GO:0005829">
    <property type="term" value="C:cytosol"/>
    <property type="evidence" value="ECO:0000304"/>
    <property type="project" value="Reactome"/>
</dbReference>
<dbReference type="GO" id="GO:0016328">
    <property type="term" value="C:lateral plasma membrane"/>
    <property type="evidence" value="ECO:0007669"/>
    <property type="project" value="Ensembl"/>
</dbReference>
<dbReference type="GO" id="GO:0051015">
    <property type="term" value="F:actin filament binding"/>
    <property type="evidence" value="ECO:0000318"/>
    <property type="project" value="GO_Central"/>
</dbReference>
<dbReference type="GO" id="GO:0005516">
    <property type="term" value="F:calmodulin binding"/>
    <property type="evidence" value="ECO:0000353"/>
    <property type="project" value="UniProtKB"/>
</dbReference>
<dbReference type="GO" id="GO:0005096">
    <property type="term" value="F:GTPase activator activity"/>
    <property type="evidence" value="ECO:0000318"/>
    <property type="project" value="GO_Central"/>
</dbReference>
<dbReference type="GO" id="GO:0070856">
    <property type="term" value="F:myosin VI light chain binding"/>
    <property type="evidence" value="ECO:0000353"/>
    <property type="project" value="UniProtKB"/>
</dbReference>
<dbReference type="GO" id="GO:0031267">
    <property type="term" value="F:small GTPase binding"/>
    <property type="evidence" value="ECO:0007669"/>
    <property type="project" value="Ensembl"/>
</dbReference>
<dbReference type="GO" id="GO:0070371">
    <property type="term" value="P:ERK1 and ERK2 cascade"/>
    <property type="evidence" value="ECO:0007669"/>
    <property type="project" value="Ensembl"/>
</dbReference>
<dbReference type="GO" id="GO:0000082">
    <property type="term" value="P:G1/S transition of mitotic cell cycle"/>
    <property type="evidence" value="ECO:0007669"/>
    <property type="project" value="Ensembl"/>
</dbReference>
<dbReference type="GO" id="GO:0010467">
    <property type="term" value="P:gene expression"/>
    <property type="evidence" value="ECO:0007669"/>
    <property type="project" value="Ensembl"/>
</dbReference>
<dbReference type="GO" id="GO:0033598">
    <property type="term" value="P:mammary gland epithelial cell proliferation"/>
    <property type="evidence" value="ECO:0007669"/>
    <property type="project" value="Ensembl"/>
</dbReference>
<dbReference type="GO" id="GO:1903479">
    <property type="term" value="P:mitotic actomyosin contractile ring assembly actin filament organization"/>
    <property type="evidence" value="ECO:0000318"/>
    <property type="project" value="GO_Central"/>
</dbReference>
<dbReference type="GO" id="GO:0010629">
    <property type="term" value="P:negative regulation of gene expression"/>
    <property type="evidence" value="ECO:0007669"/>
    <property type="project" value="Ensembl"/>
</dbReference>
<dbReference type="GO" id="GO:0010628">
    <property type="term" value="P:positive regulation of gene expression"/>
    <property type="evidence" value="ECO:0007669"/>
    <property type="project" value="Ensembl"/>
</dbReference>
<dbReference type="GO" id="GO:0033601">
    <property type="term" value="P:positive regulation of mammary gland epithelial cell proliferation"/>
    <property type="evidence" value="ECO:0007669"/>
    <property type="project" value="Ensembl"/>
</dbReference>
<dbReference type="GO" id="GO:0043410">
    <property type="term" value="P:positive regulation of MAPK cascade"/>
    <property type="evidence" value="ECO:0007669"/>
    <property type="project" value="Ensembl"/>
</dbReference>
<dbReference type="GO" id="GO:0007265">
    <property type="term" value="P:Ras protein signal transduction"/>
    <property type="evidence" value="ECO:0007669"/>
    <property type="project" value="Ensembl"/>
</dbReference>
<dbReference type="GO" id="GO:0008361">
    <property type="term" value="P:regulation of cell size"/>
    <property type="evidence" value="ECO:0007669"/>
    <property type="project" value="Ensembl"/>
</dbReference>
<dbReference type="CDD" id="cd12207">
    <property type="entry name" value="RasGAP_IQGAP3"/>
    <property type="match status" value="1"/>
</dbReference>
<dbReference type="FunFam" id="1.10.418.10:FF:000013">
    <property type="entry name" value="IQ motif containing GTPase activating protein 1"/>
    <property type="match status" value="1"/>
</dbReference>
<dbReference type="FunFam" id="1.10.506.10:FF:000004">
    <property type="entry name" value="IQ motif containing GTPase activating protein 1"/>
    <property type="match status" value="1"/>
</dbReference>
<dbReference type="FunFam" id="1.20.5.190:FF:000033">
    <property type="entry name" value="IQ motif containing GTPase activating protein 3"/>
    <property type="match status" value="1"/>
</dbReference>
<dbReference type="Gene3D" id="1.20.5.190">
    <property type="match status" value="2"/>
</dbReference>
<dbReference type="Gene3D" id="1.10.418.10">
    <property type="entry name" value="Calponin-like domain"/>
    <property type="match status" value="1"/>
</dbReference>
<dbReference type="Gene3D" id="1.10.506.10">
    <property type="entry name" value="GTPase Activation - p120gap, domain 1"/>
    <property type="match status" value="1"/>
</dbReference>
<dbReference type="InterPro" id="IPR001715">
    <property type="entry name" value="CH_dom"/>
</dbReference>
<dbReference type="InterPro" id="IPR036872">
    <property type="entry name" value="CH_dom_sf"/>
</dbReference>
<dbReference type="InterPro" id="IPR000048">
    <property type="entry name" value="IQ_motif_EF-hand-BS"/>
</dbReference>
<dbReference type="InterPro" id="IPR000593">
    <property type="entry name" value="RasGAP_C"/>
</dbReference>
<dbReference type="InterPro" id="IPR023152">
    <property type="entry name" value="RasGAP_CS"/>
</dbReference>
<dbReference type="InterPro" id="IPR001936">
    <property type="entry name" value="RasGAP_dom"/>
</dbReference>
<dbReference type="InterPro" id="IPR008936">
    <property type="entry name" value="Rho_GTPase_activation_prot"/>
</dbReference>
<dbReference type="PANTHER" id="PTHR14149">
    <property type="entry name" value="RAS GTPASE-ACTIVATING PROTEIN WITH IQ MOTIF"/>
    <property type="match status" value="1"/>
</dbReference>
<dbReference type="PANTHER" id="PTHR14149:SF10">
    <property type="entry name" value="RAS GTPASE-ACTIVATING-LIKE PROTEIN IQGAP3"/>
    <property type="match status" value="1"/>
</dbReference>
<dbReference type="Pfam" id="PF00307">
    <property type="entry name" value="CH"/>
    <property type="match status" value="1"/>
</dbReference>
<dbReference type="Pfam" id="PF00612">
    <property type="entry name" value="IQ"/>
    <property type="match status" value="4"/>
</dbReference>
<dbReference type="Pfam" id="PF00616">
    <property type="entry name" value="RasGAP"/>
    <property type="match status" value="1"/>
</dbReference>
<dbReference type="Pfam" id="PF03836">
    <property type="entry name" value="RasGAP_C"/>
    <property type="match status" value="1"/>
</dbReference>
<dbReference type="SMART" id="SM00033">
    <property type="entry name" value="CH"/>
    <property type="match status" value="1"/>
</dbReference>
<dbReference type="SMART" id="SM00015">
    <property type="entry name" value="IQ"/>
    <property type="match status" value="4"/>
</dbReference>
<dbReference type="SMART" id="SM00323">
    <property type="entry name" value="RasGAP"/>
    <property type="match status" value="1"/>
</dbReference>
<dbReference type="SUPFAM" id="SSF47576">
    <property type="entry name" value="Calponin-homology domain, CH-domain"/>
    <property type="match status" value="1"/>
</dbReference>
<dbReference type="SUPFAM" id="SSF48350">
    <property type="entry name" value="GTPase activation domain, GAP"/>
    <property type="match status" value="1"/>
</dbReference>
<dbReference type="SUPFAM" id="SSF143885">
    <property type="entry name" value="RGC domain-like"/>
    <property type="match status" value="1"/>
</dbReference>
<dbReference type="PROSITE" id="PS50021">
    <property type="entry name" value="CH"/>
    <property type="match status" value="1"/>
</dbReference>
<dbReference type="PROSITE" id="PS50096">
    <property type="entry name" value="IQ"/>
    <property type="match status" value="4"/>
</dbReference>
<dbReference type="PROSITE" id="PS00509">
    <property type="entry name" value="RAS_GTPASE_ACTIV_1"/>
    <property type="match status" value="1"/>
</dbReference>
<dbReference type="PROSITE" id="PS50018">
    <property type="entry name" value="RAS_GTPASE_ACTIV_2"/>
    <property type="match status" value="1"/>
</dbReference>
<gene>
    <name type="primary">IQGAP3</name>
</gene>
<organism>
    <name type="scientific">Homo sapiens</name>
    <name type="common">Human</name>
    <dbReference type="NCBI Taxonomy" id="9606"/>
    <lineage>
        <taxon>Eukaryota</taxon>
        <taxon>Metazoa</taxon>
        <taxon>Chordata</taxon>
        <taxon>Craniata</taxon>
        <taxon>Vertebrata</taxon>
        <taxon>Euteleostomi</taxon>
        <taxon>Mammalia</taxon>
        <taxon>Eutheria</taxon>
        <taxon>Euarchontoglires</taxon>
        <taxon>Primates</taxon>
        <taxon>Haplorrhini</taxon>
        <taxon>Catarrhini</taxon>
        <taxon>Hominidae</taxon>
        <taxon>Homo</taxon>
    </lineage>
</organism>
<protein>
    <recommendedName>
        <fullName>Ras GTPase-activating-like protein IQGAP3</fullName>
    </recommendedName>
</protein>
<proteinExistence type="evidence at protein level"/>
<comment type="interaction">
    <interactant intactId="EBI-1237354">
        <id>Q86VI3</id>
    </interactant>
    <interactant intactId="EBI-10976677">
        <id>G5E9A7</id>
        <label>DMWD</label>
    </interactant>
    <organismsDiffer>false</organismsDiffer>
    <experiments>3</experiments>
</comment>
<comment type="interaction">
    <interactant intactId="EBI-1237354">
        <id>Q86VI3</id>
    </interactant>
    <interactant intactId="EBI-348399">
        <id>P22607</id>
        <label>FGFR3</label>
    </interactant>
    <organismsDiffer>false</organismsDiffer>
    <experiments>3</experiments>
</comment>
<comment type="interaction">
    <interactant intactId="EBI-1237354">
        <id>Q86VI3</id>
    </interactant>
    <interactant intactId="EBI-351506">
        <id>P06396</id>
        <label>GSN</label>
    </interactant>
    <organismsDiffer>false</organismsDiffer>
    <experiments>3</experiments>
</comment>
<comment type="interaction">
    <interactant intactId="EBI-1237354">
        <id>Q86VI3</id>
    </interactant>
    <interactant intactId="EBI-948266">
        <id>O14901</id>
        <label>KLF11</label>
    </interactant>
    <organismsDiffer>false</organismsDiffer>
    <experiments>3</experiments>
</comment>
<comment type="interaction">
    <interactant intactId="EBI-1237354">
        <id>Q86VI3</id>
    </interactant>
    <interactant intactId="EBI-5235340">
        <id>Q7Z699</id>
        <label>SPRED1</label>
    </interactant>
    <organismsDiffer>false</organismsDiffer>
    <experiments>3</experiments>
</comment>
<comment type="interaction">
    <interactant intactId="EBI-1237354">
        <id>Q86VI3</id>
    </interactant>
    <interactant intactId="EBI-25900580">
        <id>Q9Y649</id>
    </interactant>
    <organismsDiffer>false</organismsDiffer>
    <experiments>3</experiments>
</comment>
<reference key="1">
    <citation type="submission" date="2003-03" db="EMBL/GenBank/DDBJ databases">
        <authorList>
            <person name="Fukata M."/>
            <person name="Watanabe T."/>
            <person name="Noritake J."/>
            <person name="Kaibuchi K."/>
        </authorList>
    </citation>
    <scope>NUCLEOTIDE SEQUENCE [MRNA]</scope>
    <scope>VARIANTS GLY-391 AND CYS-663</scope>
    <source>
        <tissue>Embryonic kidney</tissue>
    </source>
</reference>
<reference key="2">
    <citation type="submission" date="2003-03" db="EMBL/GenBank/DDBJ databases">
        <title>Isolation of a novel human gene up-regulated in diffuse-type gastric cancer.</title>
        <authorList>
            <person name="Jinawath N."/>
            <person name="Furukawa Y."/>
            <person name="Nakamura Y."/>
        </authorList>
    </citation>
    <scope>NUCLEOTIDE SEQUENCE [MRNA]</scope>
    <scope>VARIANTS GLY-391 AND CYS-663</scope>
</reference>
<reference key="3">
    <citation type="journal article" date="2006" name="Nature">
        <title>The DNA sequence and biological annotation of human chromosome 1.</title>
        <authorList>
            <person name="Gregory S.G."/>
            <person name="Barlow K.F."/>
            <person name="McLay K.E."/>
            <person name="Kaul R."/>
            <person name="Swarbreck D."/>
            <person name="Dunham A."/>
            <person name="Scott C.E."/>
            <person name="Howe K.L."/>
            <person name="Woodfine K."/>
            <person name="Spencer C.C.A."/>
            <person name="Jones M.C."/>
            <person name="Gillson C."/>
            <person name="Searle S."/>
            <person name="Zhou Y."/>
            <person name="Kokocinski F."/>
            <person name="McDonald L."/>
            <person name="Evans R."/>
            <person name="Phillips K."/>
            <person name="Atkinson A."/>
            <person name="Cooper R."/>
            <person name="Jones C."/>
            <person name="Hall R.E."/>
            <person name="Andrews T.D."/>
            <person name="Lloyd C."/>
            <person name="Ainscough R."/>
            <person name="Almeida J.P."/>
            <person name="Ambrose K.D."/>
            <person name="Anderson F."/>
            <person name="Andrew R.W."/>
            <person name="Ashwell R.I.S."/>
            <person name="Aubin K."/>
            <person name="Babbage A.K."/>
            <person name="Bagguley C.L."/>
            <person name="Bailey J."/>
            <person name="Beasley H."/>
            <person name="Bethel G."/>
            <person name="Bird C.P."/>
            <person name="Bray-Allen S."/>
            <person name="Brown J.Y."/>
            <person name="Brown A.J."/>
            <person name="Buckley D."/>
            <person name="Burton J."/>
            <person name="Bye J."/>
            <person name="Carder C."/>
            <person name="Chapman J.C."/>
            <person name="Clark S.Y."/>
            <person name="Clarke G."/>
            <person name="Clee C."/>
            <person name="Cobley V."/>
            <person name="Collier R.E."/>
            <person name="Corby N."/>
            <person name="Coville G.J."/>
            <person name="Davies J."/>
            <person name="Deadman R."/>
            <person name="Dunn M."/>
            <person name="Earthrowl M."/>
            <person name="Ellington A.G."/>
            <person name="Errington H."/>
            <person name="Frankish A."/>
            <person name="Frankland J."/>
            <person name="French L."/>
            <person name="Garner P."/>
            <person name="Garnett J."/>
            <person name="Gay L."/>
            <person name="Ghori M.R.J."/>
            <person name="Gibson R."/>
            <person name="Gilby L.M."/>
            <person name="Gillett W."/>
            <person name="Glithero R.J."/>
            <person name="Grafham D.V."/>
            <person name="Griffiths C."/>
            <person name="Griffiths-Jones S."/>
            <person name="Grocock R."/>
            <person name="Hammond S."/>
            <person name="Harrison E.S.I."/>
            <person name="Hart E."/>
            <person name="Haugen E."/>
            <person name="Heath P.D."/>
            <person name="Holmes S."/>
            <person name="Holt K."/>
            <person name="Howden P.J."/>
            <person name="Hunt A.R."/>
            <person name="Hunt S.E."/>
            <person name="Hunter G."/>
            <person name="Isherwood J."/>
            <person name="James R."/>
            <person name="Johnson C."/>
            <person name="Johnson D."/>
            <person name="Joy A."/>
            <person name="Kay M."/>
            <person name="Kershaw J.K."/>
            <person name="Kibukawa M."/>
            <person name="Kimberley A.M."/>
            <person name="King A."/>
            <person name="Knights A.J."/>
            <person name="Lad H."/>
            <person name="Laird G."/>
            <person name="Lawlor S."/>
            <person name="Leongamornlert D.A."/>
            <person name="Lloyd D.M."/>
            <person name="Loveland J."/>
            <person name="Lovell J."/>
            <person name="Lush M.J."/>
            <person name="Lyne R."/>
            <person name="Martin S."/>
            <person name="Mashreghi-Mohammadi M."/>
            <person name="Matthews L."/>
            <person name="Matthews N.S.W."/>
            <person name="McLaren S."/>
            <person name="Milne S."/>
            <person name="Mistry S."/>
            <person name="Moore M.J.F."/>
            <person name="Nickerson T."/>
            <person name="O'Dell C.N."/>
            <person name="Oliver K."/>
            <person name="Palmeiri A."/>
            <person name="Palmer S.A."/>
            <person name="Parker A."/>
            <person name="Patel D."/>
            <person name="Pearce A.V."/>
            <person name="Peck A.I."/>
            <person name="Pelan S."/>
            <person name="Phelps K."/>
            <person name="Phillimore B.J."/>
            <person name="Plumb R."/>
            <person name="Rajan J."/>
            <person name="Raymond C."/>
            <person name="Rouse G."/>
            <person name="Saenphimmachak C."/>
            <person name="Sehra H.K."/>
            <person name="Sheridan E."/>
            <person name="Shownkeen R."/>
            <person name="Sims S."/>
            <person name="Skuce C.D."/>
            <person name="Smith M."/>
            <person name="Steward C."/>
            <person name="Subramanian S."/>
            <person name="Sycamore N."/>
            <person name="Tracey A."/>
            <person name="Tromans A."/>
            <person name="Van Helmond Z."/>
            <person name="Wall M."/>
            <person name="Wallis J.M."/>
            <person name="White S."/>
            <person name="Whitehead S.L."/>
            <person name="Wilkinson J.E."/>
            <person name="Willey D.L."/>
            <person name="Williams H."/>
            <person name="Wilming L."/>
            <person name="Wray P.W."/>
            <person name="Wu Z."/>
            <person name="Coulson A."/>
            <person name="Vaudin M."/>
            <person name="Sulston J.E."/>
            <person name="Durbin R.M."/>
            <person name="Hubbard T."/>
            <person name="Wooster R."/>
            <person name="Dunham I."/>
            <person name="Carter N.P."/>
            <person name="McVean G."/>
            <person name="Ross M.T."/>
            <person name="Harrow J."/>
            <person name="Olson M.V."/>
            <person name="Beck S."/>
            <person name="Rogers J."/>
            <person name="Bentley D.R."/>
        </authorList>
    </citation>
    <scope>NUCLEOTIDE SEQUENCE [LARGE SCALE GENOMIC DNA]</scope>
</reference>
<reference key="4">
    <citation type="journal article" date="2004" name="Nat. Genet.">
        <title>Complete sequencing and characterization of 21,243 full-length human cDNAs.</title>
        <authorList>
            <person name="Ota T."/>
            <person name="Suzuki Y."/>
            <person name="Nishikawa T."/>
            <person name="Otsuki T."/>
            <person name="Sugiyama T."/>
            <person name="Irie R."/>
            <person name="Wakamatsu A."/>
            <person name="Hayashi K."/>
            <person name="Sato H."/>
            <person name="Nagai K."/>
            <person name="Kimura K."/>
            <person name="Makita H."/>
            <person name="Sekine M."/>
            <person name="Obayashi M."/>
            <person name="Nishi T."/>
            <person name="Shibahara T."/>
            <person name="Tanaka T."/>
            <person name="Ishii S."/>
            <person name="Yamamoto J."/>
            <person name="Saito K."/>
            <person name="Kawai Y."/>
            <person name="Isono Y."/>
            <person name="Nakamura Y."/>
            <person name="Nagahari K."/>
            <person name="Murakami K."/>
            <person name="Yasuda T."/>
            <person name="Iwayanagi T."/>
            <person name="Wagatsuma M."/>
            <person name="Shiratori A."/>
            <person name="Sudo H."/>
            <person name="Hosoiri T."/>
            <person name="Kaku Y."/>
            <person name="Kodaira H."/>
            <person name="Kondo H."/>
            <person name="Sugawara M."/>
            <person name="Takahashi M."/>
            <person name="Kanda K."/>
            <person name="Yokoi T."/>
            <person name="Furuya T."/>
            <person name="Kikkawa E."/>
            <person name="Omura Y."/>
            <person name="Abe K."/>
            <person name="Kamihara K."/>
            <person name="Katsuta N."/>
            <person name="Sato K."/>
            <person name="Tanikawa M."/>
            <person name="Yamazaki M."/>
            <person name="Ninomiya K."/>
            <person name="Ishibashi T."/>
            <person name="Yamashita H."/>
            <person name="Murakawa K."/>
            <person name="Fujimori K."/>
            <person name="Tanai H."/>
            <person name="Kimata M."/>
            <person name="Watanabe M."/>
            <person name="Hiraoka S."/>
            <person name="Chiba Y."/>
            <person name="Ishida S."/>
            <person name="Ono Y."/>
            <person name="Takiguchi S."/>
            <person name="Watanabe S."/>
            <person name="Yosida M."/>
            <person name="Hotuta T."/>
            <person name="Kusano J."/>
            <person name="Kanehori K."/>
            <person name="Takahashi-Fujii A."/>
            <person name="Hara H."/>
            <person name="Tanase T.-O."/>
            <person name="Nomura Y."/>
            <person name="Togiya S."/>
            <person name="Komai F."/>
            <person name="Hara R."/>
            <person name="Takeuchi K."/>
            <person name="Arita M."/>
            <person name="Imose N."/>
            <person name="Musashino K."/>
            <person name="Yuuki H."/>
            <person name="Oshima A."/>
            <person name="Sasaki N."/>
            <person name="Aotsuka S."/>
            <person name="Yoshikawa Y."/>
            <person name="Matsunawa H."/>
            <person name="Ichihara T."/>
            <person name="Shiohata N."/>
            <person name="Sano S."/>
            <person name="Moriya S."/>
            <person name="Momiyama H."/>
            <person name="Satoh N."/>
            <person name="Takami S."/>
            <person name="Terashima Y."/>
            <person name="Suzuki O."/>
            <person name="Nakagawa S."/>
            <person name="Senoh A."/>
            <person name="Mizoguchi H."/>
            <person name="Goto Y."/>
            <person name="Shimizu F."/>
            <person name="Wakebe H."/>
            <person name="Hishigaki H."/>
            <person name="Watanabe T."/>
            <person name="Sugiyama A."/>
            <person name="Takemoto M."/>
            <person name="Kawakami B."/>
            <person name="Yamazaki M."/>
            <person name="Watanabe K."/>
            <person name="Kumagai A."/>
            <person name="Itakura S."/>
            <person name="Fukuzumi Y."/>
            <person name="Fujimori Y."/>
            <person name="Komiyama M."/>
            <person name="Tashiro H."/>
            <person name="Tanigami A."/>
            <person name="Fujiwara T."/>
            <person name="Ono T."/>
            <person name="Yamada K."/>
            <person name="Fujii Y."/>
            <person name="Ozaki K."/>
            <person name="Hirao M."/>
            <person name="Ohmori Y."/>
            <person name="Kawabata A."/>
            <person name="Hikiji T."/>
            <person name="Kobatake N."/>
            <person name="Inagaki H."/>
            <person name="Ikema Y."/>
            <person name="Okamoto S."/>
            <person name="Okitani R."/>
            <person name="Kawakami T."/>
            <person name="Noguchi S."/>
            <person name="Itoh T."/>
            <person name="Shigeta K."/>
            <person name="Senba T."/>
            <person name="Matsumura K."/>
            <person name="Nakajima Y."/>
            <person name="Mizuno T."/>
            <person name="Morinaga M."/>
            <person name="Sasaki M."/>
            <person name="Togashi T."/>
            <person name="Oyama M."/>
            <person name="Hata H."/>
            <person name="Watanabe M."/>
            <person name="Komatsu T."/>
            <person name="Mizushima-Sugano J."/>
            <person name="Satoh T."/>
            <person name="Shirai Y."/>
            <person name="Takahashi Y."/>
            <person name="Nakagawa K."/>
            <person name="Okumura K."/>
            <person name="Nagase T."/>
            <person name="Nomura N."/>
            <person name="Kikuchi H."/>
            <person name="Masuho Y."/>
            <person name="Yamashita R."/>
            <person name="Nakai K."/>
            <person name="Yada T."/>
            <person name="Nakamura Y."/>
            <person name="Ohara O."/>
            <person name="Isogai T."/>
            <person name="Sugano S."/>
        </authorList>
    </citation>
    <scope>NUCLEOTIDE SEQUENCE [LARGE SCALE MRNA] OF 574-1631</scope>
</reference>
<reference key="5">
    <citation type="journal article" date="2008" name="Mol. Cell">
        <title>Kinase-selective enrichment enables quantitative phosphoproteomics of the kinome across the cell cycle.</title>
        <authorList>
            <person name="Daub H."/>
            <person name="Olsen J.V."/>
            <person name="Bairlein M."/>
            <person name="Gnad F."/>
            <person name="Oppermann F.S."/>
            <person name="Korner R."/>
            <person name="Greff Z."/>
            <person name="Keri G."/>
            <person name="Stemmann O."/>
            <person name="Mann M."/>
        </authorList>
    </citation>
    <scope>PHOSPHORYLATION [LARGE SCALE ANALYSIS] AT SER-539</scope>
    <scope>IDENTIFICATION BY MASS SPECTROMETRY [LARGE SCALE ANALYSIS]</scope>
    <source>
        <tissue>Cervix carcinoma</tissue>
    </source>
</reference>
<reference key="6">
    <citation type="journal article" date="2008" name="Proc. Natl. Acad. Sci. U.S.A.">
        <title>A quantitative atlas of mitotic phosphorylation.</title>
        <authorList>
            <person name="Dephoure N."/>
            <person name="Zhou C."/>
            <person name="Villen J."/>
            <person name="Beausoleil S.A."/>
            <person name="Bakalarski C.E."/>
            <person name="Elledge S.J."/>
            <person name="Gygi S.P."/>
        </authorList>
    </citation>
    <scope>PHOSPHORYLATION [LARGE SCALE ANALYSIS] AT SER-1424</scope>
    <scope>IDENTIFICATION BY MASS SPECTROMETRY [LARGE SCALE ANALYSIS]</scope>
    <source>
        <tissue>Cervix carcinoma</tissue>
    </source>
</reference>
<reference key="7">
    <citation type="journal article" date="2010" name="Sci. Signal.">
        <title>Quantitative phosphoproteomics reveals widespread full phosphorylation site occupancy during mitosis.</title>
        <authorList>
            <person name="Olsen J.V."/>
            <person name="Vermeulen M."/>
            <person name="Santamaria A."/>
            <person name="Kumar C."/>
            <person name="Miller M.L."/>
            <person name="Jensen L.J."/>
            <person name="Gnad F."/>
            <person name="Cox J."/>
            <person name="Jensen T.S."/>
            <person name="Nigg E.A."/>
            <person name="Brunak S."/>
            <person name="Mann M."/>
        </authorList>
    </citation>
    <scope>PHOSPHORYLATION [LARGE SCALE ANALYSIS] AT SER-539 AND SER-1424</scope>
    <scope>IDENTIFICATION BY MASS SPECTROMETRY [LARGE SCALE ANALYSIS]</scope>
    <source>
        <tissue>Cervix carcinoma</tissue>
    </source>
</reference>
<reference key="8">
    <citation type="journal article" date="2011" name="BMC Syst. Biol.">
        <title>Initial characterization of the human central proteome.</title>
        <authorList>
            <person name="Burkard T.R."/>
            <person name="Planyavsky M."/>
            <person name="Kaupe I."/>
            <person name="Breitwieser F.P."/>
            <person name="Buerckstuemmer T."/>
            <person name="Bennett K.L."/>
            <person name="Superti-Furga G."/>
            <person name="Colinge J."/>
        </authorList>
    </citation>
    <scope>IDENTIFICATION BY MASS SPECTROMETRY [LARGE SCALE ANALYSIS]</scope>
</reference>
<reference key="9">
    <citation type="journal article" date="2013" name="J. Proteome Res.">
        <title>Toward a comprehensive characterization of a human cancer cell phosphoproteome.</title>
        <authorList>
            <person name="Zhou H."/>
            <person name="Di Palma S."/>
            <person name="Preisinger C."/>
            <person name="Peng M."/>
            <person name="Polat A.N."/>
            <person name="Heck A.J."/>
            <person name="Mohammed S."/>
        </authorList>
    </citation>
    <scope>PHOSPHORYLATION [LARGE SCALE ANALYSIS] AT SER-1424</scope>
    <scope>IDENTIFICATION BY MASS SPECTROMETRY [LARGE SCALE ANALYSIS]</scope>
    <source>
        <tissue>Cervix carcinoma</tissue>
        <tissue>Erythroleukemia</tissue>
    </source>
</reference>
<reference key="10">
    <citation type="submission" date="2009-09" db="PDB data bank">
        <title>Crystal structure of the RGC domain of IQGAP3.</title>
        <authorList>
            <consortium name="Structural genomics consortium (SGC)"/>
        </authorList>
    </citation>
    <scope>X-RAY CRYSTALLOGRAPHY (1.88 ANGSTROMS) OF 1529-1631</scope>
</reference>
<evidence type="ECO:0000250" key="1">
    <source>
        <dbReference type="UniProtKB" id="Q9JKF1"/>
    </source>
</evidence>
<evidence type="ECO:0000255" key="2">
    <source>
        <dbReference type="PROSITE-ProRule" id="PRU00044"/>
    </source>
</evidence>
<evidence type="ECO:0000255" key="3">
    <source>
        <dbReference type="PROSITE-ProRule" id="PRU00116"/>
    </source>
</evidence>
<evidence type="ECO:0000255" key="4">
    <source>
        <dbReference type="PROSITE-ProRule" id="PRU00167"/>
    </source>
</evidence>
<evidence type="ECO:0000269" key="5">
    <source ref="1"/>
</evidence>
<evidence type="ECO:0000269" key="6">
    <source ref="2"/>
</evidence>
<evidence type="ECO:0000305" key="7"/>
<evidence type="ECO:0007744" key="8">
    <source>
    </source>
</evidence>
<evidence type="ECO:0007744" key="9">
    <source>
    </source>
</evidence>
<evidence type="ECO:0007744" key="10">
    <source>
    </source>
</evidence>
<evidence type="ECO:0007744" key="11">
    <source>
    </source>
</evidence>
<evidence type="ECO:0007829" key="12">
    <source>
        <dbReference type="PDB" id="3ISU"/>
    </source>
</evidence>